<feature type="chain" id="PRO_0000409693" description="DNA gyrase inhibitor 1">
    <location>
        <begin position="1"/>
        <end position="153"/>
    </location>
</feature>
<keyword id="KW-0963">Cytoplasm</keyword>
<keyword id="KW-1185">Reference proteome</keyword>
<keyword id="KW-0346">Stress response</keyword>
<protein>
    <recommendedName>
        <fullName evidence="1">DNA gyrase inhibitor 1</fullName>
    </recommendedName>
</protein>
<dbReference type="EMBL" id="CP002038">
    <property type="protein sequence ID" value="ADM96973.1"/>
    <property type="molecule type" value="Genomic_DNA"/>
</dbReference>
<dbReference type="RefSeq" id="WP_013316449.1">
    <property type="nucleotide sequence ID" value="NC_014500.1"/>
</dbReference>
<dbReference type="SMR" id="E0SMM6"/>
<dbReference type="STRING" id="198628.Dda3937_01199"/>
<dbReference type="KEGG" id="ddd:Dda3937_01199"/>
<dbReference type="PATRIC" id="fig|198628.6.peg.777"/>
<dbReference type="eggNOG" id="COG3449">
    <property type="taxonomic scope" value="Bacteria"/>
</dbReference>
<dbReference type="HOGENOM" id="CLU_113664_3_2_6"/>
<dbReference type="OrthoDB" id="282744at2"/>
<dbReference type="Proteomes" id="UP000006859">
    <property type="component" value="Chromosome"/>
</dbReference>
<dbReference type="GO" id="GO:0005737">
    <property type="term" value="C:cytoplasm"/>
    <property type="evidence" value="ECO:0007669"/>
    <property type="project" value="UniProtKB-SubCell"/>
</dbReference>
<dbReference type="GO" id="GO:0008657">
    <property type="term" value="F:DNA topoisomerase type II (double strand cut, ATP-hydrolyzing) inhibitor activity"/>
    <property type="evidence" value="ECO:0007669"/>
    <property type="project" value="UniProtKB-UniRule"/>
</dbReference>
<dbReference type="Gene3D" id="3.20.80.10">
    <property type="entry name" value="Regulatory factor, effector binding domain"/>
    <property type="match status" value="1"/>
</dbReference>
<dbReference type="HAMAP" id="MF_01896">
    <property type="entry name" value="DNA_gyrase_inhibitor"/>
    <property type="match status" value="1"/>
</dbReference>
<dbReference type="InterPro" id="IPR010499">
    <property type="entry name" value="AraC_E-bd"/>
</dbReference>
<dbReference type="InterPro" id="IPR050908">
    <property type="entry name" value="DNA_gyrase_inhibitor"/>
</dbReference>
<dbReference type="InterPro" id="IPR024911">
    <property type="entry name" value="DNA_gyrase_inhibitor_GyrI"/>
</dbReference>
<dbReference type="InterPro" id="IPR029442">
    <property type="entry name" value="GyrI-like"/>
</dbReference>
<dbReference type="InterPro" id="IPR011256">
    <property type="entry name" value="Reg_factor_effector_dom_sf"/>
</dbReference>
<dbReference type="NCBIfam" id="NF007451">
    <property type="entry name" value="PRK10016.1"/>
    <property type="match status" value="1"/>
</dbReference>
<dbReference type="PANTHER" id="PTHR40055:SF2">
    <property type="entry name" value="DNA GYRASE INHIBITOR"/>
    <property type="match status" value="1"/>
</dbReference>
<dbReference type="PANTHER" id="PTHR40055">
    <property type="entry name" value="TRANSCRIPTIONAL REGULATOR YGIV-RELATED"/>
    <property type="match status" value="1"/>
</dbReference>
<dbReference type="Pfam" id="PF06445">
    <property type="entry name" value="GyrI-like"/>
    <property type="match status" value="1"/>
</dbReference>
<dbReference type="SMART" id="SM00871">
    <property type="entry name" value="AraC_E_bind"/>
    <property type="match status" value="1"/>
</dbReference>
<dbReference type="SUPFAM" id="SSF55136">
    <property type="entry name" value="Probable bacterial effector-binding domain"/>
    <property type="match status" value="1"/>
</dbReference>
<proteinExistence type="inferred from homology"/>
<accession>E0SMM6</accession>
<sequence>MDYNVQHVDKRHAAGFHLVGPWEQTVPQGFEQLMKWVDEHAVQPLEWVAVYYGNPQETPPEKLEADTVVSVSADFHLPADGEGAITTEIAAGQYAIARVRVSNDDFGMSWQAFFAALLGDGKTIDPARACFEVYLNDGYSDGFWDIDMHIPVQ</sequence>
<gene>
    <name evidence="1" type="primary">sbmC1</name>
    <name type="ordered locus">Dda3937_01199</name>
</gene>
<reference key="1">
    <citation type="journal article" date="2011" name="J. Bacteriol.">
        <title>Genome sequence of the plant-pathogenic bacterium Dickeya dadantii 3937.</title>
        <authorList>
            <person name="Glasner J.D."/>
            <person name="Yang C.H."/>
            <person name="Reverchon S."/>
            <person name="Hugouvieux-Cotte-Pattat N."/>
            <person name="Condemine G."/>
            <person name="Bohin J.P."/>
            <person name="Van Gijsegem F."/>
            <person name="Yang S."/>
            <person name="Franza T."/>
            <person name="Expert D."/>
            <person name="Plunkett G. III"/>
            <person name="San Francisco M.J."/>
            <person name="Charkowski A.O."/>
            <person name="Py B."/>
            <person name="Bell K."/>
            <person name="Rauscher L."/>
            <person name="Rodriguez-Palenzuela P."/>
            <person name="Toussaint A."/>
            <person name="Holeva M.C."/>
            <person name="He S.Y."/>
            <person name="Douet V."/>
            <person name="Boccara M."/>
            <person name="Blanco C."/>
            <person name="Toth I."/>
            <person name="Anderson B.D."/>
            <person name="Biehl B.S."/>
            <person name="Mau B."/>
            <person name="Flynn S.M."/>
            <person name="Barras F."/>
            <person name="Lindeberg M."/>
            <person name="Birch P.R."/>
            <person name="Tsuyumu S."/>
            <person name="Shi X."/>
            <person name="Hibbing M."/>
            <person name="Yap M.N."/>
            <person name="Carpentier M."/>
            <person name="Dassa E."/>
            <person name="Umehara M."/>
            <person name="Kim J.F."/>
            <person name="Rusch M."/>
            <person name="Soni P."/>
            <person name="Mayhew G.F."/>
            <person name="Fouts D.E."/>
            <person name="Gill S.R."/>
            <person name="Blattner F.R."/>
            <person name="Keen N.T."/>
            <person name="Perna N.T."/>
        </authorList>
    </citation>
    <scope>NUCLEOTIDE SEQUENCE [LARGE SCALE GENOMIC DNA]</scope>
    <source>
        <strain>3937</strain>
    </source>
</reference>
<name>SBMC1_DICD3</name>
<organism>
    <name type="scientific">Dickeya dadantii (strain 3937)</name>
    <name type="common">Erwinia chrysanthemi (strain 3937)</name>
    <dbReference type="NCBI Taxonomy" id="198628"/>
    <lineage>
        <taxon>Bacteria</taxon>
        <taxon>Pseudomonadati</taxon>
        <taxon>Pseudomonadota</taxon>
        <taxon>Gammaproteobacteria</taxon>
        <taxon>Enterobacterales</taxon>
        <taxon>Pectobacteriaceae</taxon>
        <taxon>Dickeya</taxon>
    </lineage>
</organism>
<evidence type="ECO:0000255" key="1">
    <source>
        <dbReference type="HAMAP-Rule" id="MF_01896"/>
    </source>
</evidence>
<comment type="function">
    <text evidence="1">Inhibits the supercoiling activity of DNA gyrase. Acts by inhibiting DNA gyrase at an early step, prior to (or at the step of) binding of DNA by the gyrase. It protects cells against toxins that target DNA gyrase, by inhibiting activity of these toxins and reducing the formation of lethal double-strand breaks in the cell.</text>
</comment>
<comment type="subunit">
    <text evidence="1">Interacts with DNA gyrase.</text>
</comment>
<comment type="subcellular location">
    <subcellularLocation>
        <location evidence="1">Cytoplasm</location>
    </subcellularLocation>
</comment>
<comment type="similarity">
    <text evidence="1">Belongs to the DNA gyrase inhibitor family.</text>
</comment>